<comment type="function">
    <text evidence="1">Responsible for synthesis of pseudouridine from uracil-13 in transfer RNAs.</text>
</comment>
<comment type="catalytic activity">
    <reaction evidence="1">
        <text>uridine(13) in tRNA = pseudouridine(13) in tRNA</text>
        <dbReference type="Rhea" id="RHEA:42540"/>
        <dbReference type="Rhea" id="RHEA-COMP:10105"/>
        <dbReference type="Rhea" id="RHEA-COMP:10106"/>
        <dbReference type="ChEBI" id="CHEBI:65314"/>
        <dbReference type="ChEBI" id="CHEBI:65315"/>
        <dbReference type="EC" id="5.4.99.27"/>
    </reaction>
</comment>
<comment type="similarity">
    <text evidence="1">Belongs to the pseudouridine synthase TruD family.</text>
</comment>
<gene>
    <name evidence="1" type="primary">truD</name>
    <name type="ordered locus">MCA2519</name>
</gene>
<reference key="1">
    <citation type="journal article" date="2004" name="PLoS Biol.">
        <title>Genomic insights into methanotrophy: the complete genome sequence of Methylococcus capsulatus (Bath).</title>
        <authorList>
            <person name="Ward N.L."/>
            <person name="Larsen O."/>
            <person name="Sakwa J."/>
            <person name="Bruseth L."/>
            <person name="Khouri H.M."/>
            <person name="Durkin A.S."/>
            <person name="Dimitrov G."/>
            <person name="Jiang L."/>
            <person name="Scanlan D."/>
            <person name="Kang K.H."/>
            <person name="Lewis M.R."/>
            <person name="Nelson K.E."/>
            <person name="Methe B.A."/>
            <person name="Wu M."/>
            <person name="Heidelberg J.F."/>
            <person name="Paulsen I.T."/>
            <person name="Fouts D.E."/>
            <person name="Ravel J."/>
            <person name="Tettelin H."/>
            <person name="Ren Q."/>
            <person name="Read T.D."/>
            <person name="DeBoy R.T."/>
            <person name="Seshadri R."/>
            <person name="Salzberg S.L."/>
            <person name="Jensen H.B."/>
            <person name="Birkeland N.K."/>
            <person name="Nelson W.C."/>
            <person name="Dodson R.J."/>
            <person name="Grindhaug S.H."/>
            <person name="Holt I.E."/>
            <person name="Eidhammer I."/>
            <person name="Jonasen I."/>
            <person name="Vanaken S."/>
            <person name="Utterback T.R."/>
            <person name="Feldblyum T.V."/>
            <person name="Fraser C.M."/>
            <person name="Lillehaug J.R."/>
            <person name="Eisen J.A."/>
        </authorList>
    </citation>
    <scope>NUCLEOTIDE SEQUENCE [LARGE SCALE GENOMIC DNA]</scope>
    <source>
        <strain>ATCC 33009 / NCIMB 11132 / Bath</strain>
    </source>
</reference>
<evidence type="ECO:0000255" key="1">
    <source>
        <dbReference type="HAMAP-Rule" id="MF_01082"/>
    </source>
</evidence>
<organism>
    <name type="scientific">Methylococcus capsulatus (strain ATCC 33009 / NCIMB 11132 / Bath)</name>
    <dbReference type="NCBI Taxonomy" id="243233"/>
    <lineage>
        <taxon>Bacteria</taxon>
        <taxon>Pseudomonadati</taxon>
        <taxon>Pseudomonadota</taxon>
        <taxon>Gammaproteobacteria</taxon>
        <taxon>Methylococcales</taxon>
        <taxon>Methylococcaceae</taxon>
        <taxon>Methylococcus</taxon>
    </lineage>
</organism>
<proteinExistence type="inferred from homology"/>
<sequence>MTGHPDCPGFDDLPRAHGEVTCRGRIRVSPEDFRVDEILGFEPTGQGEHAFLHIRKTGENTDHVAQRIARLAGVKPMDVGYAGLKDRHAVTTQWFSVRLAGKADPDWRALESESIAVLRHTRHDRKLKRGALAGNRFRIILRGLEGVCDGLEARCAAIRAAGVPNYFGPQRFGHGGRNLQEALRLFADPRRRIDRNKRSLYLSAARSYLFNRVLAGRVEHGSWNRGVEGDAFMFTGSNAFFKTDKLDEDIQRRVEALTIHPSGTLWGRGDPVISGTALAMERVALAQCAEFREGLERCGLEVGRRALRLPVPDLEFAGVEDSACELTFSLPAGTYATTVLRELVEFDPQGWPDT</sequence>
<name>TRUD_METCA</name>
<feature type="chain" id="PRO_0000152511" description="tRNA pseudouridine synthase D">
    <location>
        <begin position="1"/>
        <end position="354"/>
    </location>
</feature>
<feature type="domain" description="TRUD" evidence="1">
    <location>
        <begin position="162"/>
        <end position="309"/>
    </location>
</feature>
<feature type="active site" description="Nucleophile" evidence="1">
    <location>
        <position position="86"/>
    </location>
</feature>
<accession>Q604M0</accession>
<dbReference type="EC" id="5.4.99.27" evidence="1"/>
<dbReference type="EMBL" id="AE017282">
    <property type="protein sequence ID" value="AAU91325.1"/>
    <property type="molecule type" value="Genomic_DNA"/>
</dbReference>
<dbReference type="RefSeq" id="WP_010961740.1">
    <property type="nucleotide sequence ID" value="NC_002977.6"/>
</dbReference>
<dbReference type="SMR" id="Q604M0"/>
<dbReference type="STRING" id="243233.MCA2519"/>
<dbReference type="GeneID" id="88224715"/>
<dbReference type="KEGG" id="mca:MCA2519"/>
<dbReference type="eggNOG" id="COG0585">
    <property type="taxonomic scope" value="Bacteria"/>
</dbReference>
<dbReference type="HOGENOM" id="CLU_005281_4_0_6"/>
<dbReference type="Proteomes" id="UP000006821">
    <property type="component" value="Chromosome"/>
</dbReference>
<dbReference type="GO" id="GO:0005829">
    <property type="term" value="C:cytosol"/>
    <property type="evidence" value="ECO:0007669"/>
    <property type="project" value="TreeGrafter"/>
</dbReference>
<dbReference type="GO" id="GO:0003723">
    <property type="term" value="F:RNA binding"/>
    <property type="evidence" value="ECO:0007669"/>
    <property type="project" value="InterPro"/>
</dbReference>
<dbReference type="GO" id="GO:0160150">
    <property type="term" value="F:tRNA pseudouridine(13) synthase activity"/>
    <property type="evidence" value="ECO:0007669"/>
    <property type="project" value="UniProtKB-EC"/>
</dbReference>
<dbReference type="GO" id="GO:0031119">
    <property type="term" value="P:tRNA pseudouridine synthesis"/>
    <property type="evidence" value="ECO:0007669"/>
    <property type="project" value="UniProtKB-UniRule"/>
</dbReference>
<dbReference type="CDD" id="cd02575">
    <property type="entry name" value="PseudoU_synth_EcTruD"/>
    <property type="match status" value="1"/>
</dbReference>
<dbReference type="Gene3D" id="3.30.2350.20">
    <property type="entry name" value="TruD, catalytic domain"/>
    <property type="match status" value="1"/>
</dbReference>
<dbReference type="Gene3D" id="3.30.2340.10">
    <property type="entry name" value="TruD, insertion domain"/>
    <property type="match status" value="1"/>
</dbReference>
<dbReference type="HAMAP" id="MF_01082">
    <property type="entry name" value="TruD"/>
    <property type="match status" value="1"/>
</dbReference>
<dbReference type="InterPro" id="IPR020103">
    <property type="entry name" value="PsdUridine_synth_cat_dom_sf"/>
</dbReference>
<dbReference type="InterPro" id="IPR001656">
    <property type="entry name" value="PsdUridine_synth_TruD"/>
</dbReference>
<dbReference type="InterPro" id="IPR020119">
    <property type="entry name" value="PsdUridine_synth_TruD_CS"/>
</dbReference>
<dbReference type="InterPro" id="IPR011760">
    <property type="entry name" value="PsdUridine_synth_TruD_insert"/>
</dbReference>
<dbReference type="InterPro" id="IPR042214">
    <property type="entry name" value="TruD_catalytic"/>
</dbReference>
<dbReference type="InterPro" id="IPR043165">
    <property type="entry name" value="TruD_insert_sf"/>
</dbReference>
<dbReference type="InterPro" id="IPR050170">
    <property type="entry name" value="TruD_pseudoU_synthase"/>
</dbReference>
<dbReference type="NCBIfam" id="NF002153">
    <property type="entry name" value="PRK00984.1-2"/>
    <property type="match status" value="1"/>
</dbReference>
<dbReference type="NCBIfam" id="TIGR00094">
    <property type="entry name" value="tRNA_TruD_broad"/>
    <property type="match status" value="1"/>
</dbReference>
<dbReference type="PANTHER" id="PTHR47811">
    <property type="entry name" value="TRNA PSEUDOURIDINE SYNTHASE D"/>
    <property type="match status" value="1"/>
</dbReference>
<dbReference type="PANTHER" id="PTHR47811:SF1">
    <property type="entry name" value="TRNA PSEUDOURIDINE SYNTHASE D"/>
    <property type="match status" value="1"/>
</dbReference>
<dbReference type="Pfam" id="PF01142">
    <property type="entry name" value="TruD"/>
    <property type="match status" value="2"/>
</dbReference>
<dbReference type="SUPFAM" id="SSF55120">
    <property type="entry name" value="Pseudouridine synthase"/>
    <property type="match status" value="1"/>
</dbReference>
<dbReference type="PROSITE" id="PS50984">
    <property type="entry name" value="TRUD"/>
    <property type="match status" value="1"/>
</dbReference>
<dbReference type="PROSITE" id="PS01268">
    <property type="entry name" value="UPF0024"/>
    <property type="match status" value="1"/>
</dbReference>
<protein>
    <recommendedName>
        <fullName evidence="1">tRNA pseudouridine synthase D</fullName>
        <ecNumber evidence="1">5.4.99.27</ecNumber>
    </recommendedName>
    <alternativeName>
        <fullName evidence="1">tRNA pseudouridine(13) synthase</fullName>
    </alternativeName>
    <alternativeName>
        <fullName evidence="1">tRNA pseudouridylate synthase D</fullName>
    </alternativeName>
    <alternativeName>
        <fullName evidence="1">tRNA-uridine isomerase D</fullName>
    </alternativeName>
</protein>
<keyword id="KW-0413">Isomerase</keyword>
<keyword id="KW-1185">Reference proteome</keyword>
<keyword id="KW-0819">tRNA processing</keyword>